<keyword id="KW-0002">3D-structure</keyword>
<keyword id="KW-1015">Disulfide bond</keyword>
<keyword id="KW-1199">Hemostasis impairing toxin</keyword>
<keyword id="KW-0964">Secreted</keyword>
<keyword id="KW-0732">Signal</keyword>
<keyword id="KW-0800">Toxin</keyword>
<protein>
    <recommendedName>
        <fullName>Snaclec clone 2100755</fullName>
    </recommendedName>
    <alternativeName>
        <fullName>C-type lectin clone 2100755</fullName>
    </alternativeName>
</protein>
<accession>Q8JIV8</accession>
<reference key="1">
    <citation type="submission" date="2002-03" db="EMBL/GenBank/DDBJ databases">
        <title>Member of C-type lectin family from Deinagkistrodon acutus.</title>
        <authorList>
            <person name="Yu H."/>
            <person name="Xiang K."/>
            <person name="Wang Y."/>
            <person name="Liu J."/>
        </authorList>
    </citation>
    <scope>NUCLEOTIDE SEQUENCE [MRNA]</scope>
</reference>
<feature type="signal peptide" evidence="2">
    <location>
        <begin position="1"/>
        <end position="23"/>
    </location>
</feature>
<feature type="chain" id="PRO_0000355234" description="Snaclec clone 2100755">
    <location>
        <begin position="24"/>
        <end position="155"/>
    </location>
</feature>
<feature type="domain" description="C-type lectin" evidence="3">
    <location>
        <begin position="32"/>
        <end position="145"/>
    </location>
</feature>
<feature type="disulfide bond" evidence="3">
    <location>
        <begin position="25"/>
        <end position="36"/>
    </location>
</feature>
<feature type="disulfide bond" evidence="3">
    <location>
        <begin position="53"/>
        <end position="144"/>
    </location>
</feature>
<feature type="disulfide bond" description="Interchain" evidence="3">
    <location>
        <position position="98"/>
    </location>
</feature>
<feature type="disulfide bond" evidence="3">
    <location>
        <begin position="119"/>
        <end position="136"/>
    </location>
</feature>
<feature type="strand" evidence="5">
    <location>
        <begin position="30"/>
        <end position="32"/>
    </location>
</feature>
<feature type="strand" evidence="5">
    <location>
        <begin position="35"/>
        <end position="44"/>
    </location>
</feature>
<feature type="helix" evidence="5">
    <location>
        <begin position="46"/>
        <end position="56"/>
    </location>
</feature>
<feature type="helix" evidence="5">
    <location>
        <begin position="68"/>
        <end position="81"/>
    </location>
</feature>
<feature type="strand" evidence="5">
    <location>
        <begin position="86"/>
        <end position="92"/>
    </location>
</feature>
<feature type="turn" evidence="5">
    <location>
        <begin position="94"/>
        <end position="97"/>
    </location>
</feature>
<feature type="strand" evidence="5">
    <location>
        <begin position="100"/>
        <end position="102"/>
    </location>
</feature>
<feature type="strand" evidence="5">
    <location>
        <begin position="118"/>
        <end position="124"/>
    </location>
</feature>
<feature type="strand" evidence="5">
    <location>
        <begin position="129"/>
        <end position="135"/>
    </location>
</feature>
<feature type="strand" evidence="5">
    <location>
        <begin position="140"/>
        <end position="147"/>
    </location>
</feature>
<organism>
    <name type="scientific">Deinagkistrodon acutus</name>
    <name type="common">Hundred-pace snake</name>
    <name type="synonym">Agkistrodon acutus</name>
    <dbReference type="NCBI Taxonomy" id="36307"/>
    <lineage>
        <taxon>Eukaryota</taxon>
        <taxon>Metazoa</taxon>
        <taxon>Chordata</taxon>
        <taxon>Craniata</taxon>
        <taxon>Vertebrata</taxon>
        <taxon>Euteleostomi</taxon>
        <taxon>Lepidosauria</taxon>
        <taxon>Squamata</taxon>
        <taxon>Bifurcata</taxon>
        <taxon>Unidentata</taxon>
        <taxon>Episquamata</taxon>
        <taxon>Toxicofera</taxon>
        <taxon>Serpentes</taxon>
        <taxon>Colubroidea</taxon>
        <taxon>Viperidae</taxon>
        <taxon>Crotalinae</taxon>
        <taxon>Deinagkistrodon</taxon>
    </lineage>
</organism>
<proteinExistence type="evidence at protein level"/>
<dbReference type="EMBL" id="AY091760">
    <property type="protein sequence ID" value="AAM22788.1"/>
    <property type="molecule type" value="mRNA"/>
</dbReference>
<dbReference type="PDB" id="7QAJ">
    <property type="method" value="X-ray"/>
    <property type="resolution" value="2.10 A"/>
    <property type="chains" value="B/D/F/H=24-155"/>
</dbReference>
<dbReference type="PDBsum" id="7QAJ"/>
<dbReference type="SMR" id="Q8JIV8"/>
<dbReference type="GO" id="GO:0005576">
    <property type="term" value="C:extracellular region"/>
    <property type="evidence" value="ECO:0007669"/>
    <property type="project" value="UniProtKB-SubCell"/>
</dbReference>
<dbReference type="GO" id="GO:0090729">
    <property type="term" value="F:toxin activity"/>
    <property type="evidence" value="ECO:0007669"/>
    <property type="project" value="UniProtKB-KW"/>
</dbReference>
<dbReference type="FunFam" id="3.10.100.10:FF:000087">
    <property type="entry name" value="Snaclec rhodocetin subunit delta"/>
    <property type="match status" value="1"/>
</dbReference>
<dbReference type="Gene3D" id="3.10.100.10">
    <property type="entry name" value="Mannose-Binding Protein A, subunit A"/>
    <property type="match status" value="1"/>
</dbReference>
<dbReference type="InterPro" id="IPR001304">
    <property type="entry name" value="C-type_lectin-like"/>
</dbReference>
<dbReference type="InterPro" id="IPR016186">
    <property type="entry name" value="C-type_lectin-like/link_sf"/>
</dbReference>
<dbReference type="InterPro" id="IPR050111">
    <property type="entry name" value="C-type_lectin/snaclec_domain"/>
</dbReference>
<dbReference type="InterPro" id="IPR018378">
    <property type="entry name" value="C-type_lectin_CS"/>
</dbReference>
<dbReference type="InterPro" id="IPR016187">
    <property type="entry name" value="CTDL_fold"/>
</dbReference>
<dbReference type="PANTHER" id="PTHR22803">
    <property type="entry name" value="MANNOSE, PHOSPHOLIPASE, LECTIN RECEPTOR RELATED"/>
    <property type="match status" value="1"/>
</dbReference>
<dbReference type="Pfam" id="PF00059">
    <property type="entry name" value="Lectin_C"/>
    <property type="match status" value="1"/>
</dbReference>
<dbReference type="PRINTS" id="PR01504">
    <property type="entry name" value="PNCREATITSAP"/>
</dbReference>
<dbReference type="SMART" id="SM00034">
    <property type="entry name" value="CLECT"/>
    <property type="match status" value="1"/>
</dbReference>
<dbReference type="SUPFAM" id="SSF56436">
    <property type="entry name" value="C-type lectin-like"/>
    <property type="match status" value="1"/>
</dbReference>
<dbReference type="PROSITE" id="PS00615">
    <property type="entry name" value="C_TYPE_LECTIN_1"/>
    <property type="match status" value="1"/>
</dbReference>
<dbReference type="PROSITE" id="PS50041">
    <property type="entry name" value="C_TYPE_LECTIN_2"/>
    <property type="match status" value="1"/>
</dbReference>
<evidence type="ECO:0000250" key="1"/>
<evidence type="ECO:0000255" key="2"/>
<evidence type="ECO:0000255" key="3">
    <source>
        <dbReference type="PROSITE-ProRule" id="PRU00040"/>
    </source>
</evidence>
<evidence type="ECO:0000305" key="4"/>
<evidence type="ECO:0007829" key="5">
    <source>
        <dbReference type="PDB" id="7QAJ"/>
    </source>
</evidence>
<sequence>MGRFIFVSFGLLVVFLSLSGTAADCPSGWSSYDGHCYQVFSDLKNWDDAESFCSGQHEGSRLASIHSREEEAFVGKMASRTLKYTSMWLGLNNPWKECKWEWSDDTRLDYKVWTRRPYCTVMVVKTDRIFWFNRGCEKSVSFVCKFKAYSEDAAE</sequence>
<comment type="function">
    <text evidence="1">Interferes with one step of hemostasis (modulation of platelet aggregation, or coagulation cascade, for example).</text>
</comment>
<comment type="subunit">
    <text evidence="1">Heterodimer; disulfide-linked.</text>
</comment>
<comment type="subcellular location">
    <subcellularLocation>
        <location evidence="1">Secreted</location>
    </subcellularLocation>
</comment>
<comment type="miscellaneous">
    <text>Shows greater sequence similarity to the beta than alpha subunits compared to other heterodimer snaclecs.</text>
</comment>
<comment type="similarity">
    <text evidence="4">Belongs to the snaclec family.</text>
</comment>
<name>SL_DEIAC</name>